<organism>
    <name type="scientific">Xylella fastidiosa (strain M23)</name>
    <dbReference type="NCBI Taxonomy" id="405441"/>
    <lineage>
        <taxon>Bacteria</taxon>
        <taxon>Pseudomonadati</taxon>
        <taxon>Pseudomonadota</taxon>
        <taxon>Gammaproteobacteria</taxon>
        <taxon>Lysobacterales</taxon>
        <taxon>Lysobacteraceae</taxon>
        <taxon>Xylella</taxon>
    </lineage>
</organism>
<evidence type="ECO:0000255" key="1">
    <source>
        <dbReference type="HAMAP-Rule" id="MF_00049"/>
    </source>
</evidence>
<accession>B2I5T5</accession>
<proteinExistence type="inferred from homology"/>
<feature type="chain" id="PRO_1000091380" description="Leucine--tRNA ligase">
    <location>
        <begin position="1"/>
        <end position="879"/>
    </location>
</feature>
<feature type="short sequence motif" description="'HIGH' region">
    <location>
        <begin position="45"/>
        <end position="55"/>
    </location>
</feature>
<feature type="short sequence motif" description="'KMSKS' region">
    <location>
        <begin position="637"/>
        <end position="641"/>
    </location>
</feature>
<feature type="binding site" evidence="1">
    <location>
        <position position="640"/>
    </location>
    <ligand>
        <name>ATP</name>
        <dbReference type="ChEBI" id="CHEBI:30616"/>
    </ligand>
</feature>
<gene>
    <name evidence="1" type="primary">leuS</name>
    <name type="ordered locus">XfasM23_1309</name>
</gene>
<sequence length="879" mass="99824">MPTEANTYDPQRIESTAQHYWDSTHAFEVNEHSNKPKYYCLSMLPYPSGALHMGHVRNYTIGDVISRYKRMTGHNVLQPMGWDAFGLPAENAAIKNKVAPAQWTYKNIERMRTQLKSLGYAINWSREFATCQPDYYVHEQHMFTRLMRKGLAYRRNALVNWDPVDQTVLANEQVIDGRGWRSGAPVEKREIPQWFLRITDYAQELLDGLNTLDDWPEPVKTMQRNWIGRSEGLEIRFEVRDVDNNALEALRVFTTRPDTLFGVTFVSIAPEHPLALHAAKSNPGLAGLLTQMKQGGLSEAELKTQEKRGMDTGLKAIHPITNEQLPVWVANFVLMAYGTGAVMAVPGHDQRDQEFANKYGLPIRQVIALKEPKNQDESTWEPDVWRDWYADKTREFELINSAEFDGLDYQGAFEVLAERFERQGRGQRRVNYRLRDWGVSRQRYWGCPIPVIYCPTCGAVPVPENQLPVILPENVAFSGTGSPIKTDPEWRKTTCPECGGPAERETDTFDTFMESSWYYARYTSPNAREMLDKRANYWLPVDQYIGGIEHAILHLMYFRFYHKLMRDARLVDSDEPAINLLTQGMVIAETFYRKNPDGSKDWINPADVNVECDERGRITGATLISDGQPVLIGATEKMSKSKNNGVDPQIMVTKYGADTVRLFSMFAAPPEQSLEWNETGVEGMARFLRRLWTQVHHHASHGPATALDITALDTAQKAIRCKTHNTIARVEDDYGRRRSFNTAIAAVMELSNTLARFDDTTTQSHAVRQEALETMVLLLNPITPHTSHALWQTLGHPETLLEDLPFPKVDTTALVRETAILAVQINGKLRGTIEVATDAPREHIENNALTEPNTARFLEGLTVLKIIIVPGKIVNIVAR</sequence>
<protein>
    <recommendedName>
        <fullName evidence="1">Leucine--tRNA ligase</fullName>
        <ecNumber evidence="1">6.1.1.4</ecNumber>
    </recommendedName>
    <alternativeName>
        <fullName evidence="1">Leucyl-tRNA synthetase</fullName>
        <shortName evidence="1">LeuRS</shortName>
    </alternativeName>
</protein>
<dbReference type="EC" id="6.1.1.4" evidence="1"/>
<dbReference type="EMBL" id="CP001011">
    <property type="protein sequence ID" value="ACB92730.1"/>
    <property type="molecule type" value="Genomic_DNA"/>
</dbReference>
<dbReference type="RefSeq" id="WP_004088586.1">
    <property type="nucleotide sequence ID" value="NC_010577.1"/>
</dbReference>
<dbReference type="SMR" id="B2I5T5"/>
<dbReference type="GeneID" id="93905030"/>
<dbReference type="KEGG" id="xfn:XfasM23_1309"/>
<dbReference type="HOGENOM" id="CLU_004427_0_0_6"/>
<dbReference type="Proteomes" id="UP000001698">
    <property type="component" value="Chromosome"/>
</dbReference>
<dbReference type="GO" id="GO:0005829">
    <property type="term" value="C:cytosol"/>
    <property type="evidence" value="ECO:0007669"/>
    <property type="project" value="TreeGrafter"/>
</dbReference>
<dbReference type="GO" id="GO:0002161">
    <property type="term" value="F:aminoacyl-tRNA deacylase activity"/>
    <property type="evidence" value="ECO:0007669"/>
    <property type="project" value="InterPro"/>
</dbReference>
<dbReference type="GO" id="GO:0005524">
    <property type="term" value="F:ATP binding"/>
    <property type="evidence" value="ECO:0007669"/>
    <property type="project" value="UniProtKB-UniRule"/>
</dbReference>
<dbReference type="GO" id="GO:0004823">
    <property type="term" value="F:leucine-tRNA ligase activity"/>
    <property type="evidence" value="ECO:0007669"/>
    <property type="project" value="UniProtKB-UniRule"/>
</dbReference>
<dbReference type="GO" id="GO:0006429">
    <property type="term" value="P:leucyl-tRNA aminoacylation"/>
    <property type="evidence" value="ECO:0007669"/>
    <property type="project" value="UniProtKB-UniRule"/>
</dbReference>
<dbReference type="CDD" id="cd07958">
    <property type="entry name" value="Anticodon_Ia_Leu_BEm"/>
    <property type="match status" value="1"/>
</dbReference>
<dbReference type="CDD" id="cd00812">
    <property type="entry name" value="LeuRS_core"/>
    <property type="match status" value="1"/>
</dbReference>
<dbReference type="FunFam" id="1.10.730.10:FF:000003">
    <property type="entry name" value="Leucine--tRNA ligase"/>
    <property type="match status" value="1"/>
</dbReference>
<dbReference type="FunFam" id="2.20.28.290:FF:000001">
    <property type="entry name" value="Leucine--tRNA ligase"/>
    <property type="match status" value="1"/>
</dbReference>
<dbReference type="FunFam" id="3.10.20.590:FF:000001">
    <property type="entry name" value="Leucine--tRNA ligase"/>
    <property type="match status" value="1"/>
</dbReference>
<dbReference type="FunFam" id="3.40.50.620:FF:000003">
    <property type="entry name" value="Leucine--tRNA ligase"/>
    <property type="match status" value="1"/>
</dbReference>
<dbReference type="FunFam" id="3.40.50.620:FF:000124">
    <property type="entry name" value="Leucine--tRNA ligase"/>
    <property type="match status" value="1"/>
</dbReference>
<dbReference type="FunFam" id="3.90.740.10:FF:000012">
    <property type="entry name" value="Leucine--tRNA ligase"/>
    <property type="match status" value="1"/>
</dbReference>
<dbReference type="Gene3D" id="2.20.28.290">
    <property type="match status" value="1"/>
</dbReference>
<dbReference type="Gene3D" id="3.10.20.590">
    <property type="match status" value="1"/>
</dbReference>
<dbReference type="Gene3D" id="3.40.50.620">
    <property type="entry name" value="HUPs"/>
    <property type="match status" value="2"/>
</dbReference>
<dbReference type="Gene3D" id="1.10.730.10">
    <property type="entry name" value="Isoleucyl-tRNA Synthetase, Domain 1"/>
    <property type="match status" value="1"/>
</dbReference>
<dbReference type="Gene3D" id="3.90.740.10">
    <property type="entry name" value="Valyl/Leucyl/Isoleucyl-tRNA synthetase, editing domain"/>
    <property type="match status" value="1"/>
</dbReference>
<dbReference type="HAMAP" id="MF_00049_B">
    <property type="entry name" value="Leu_tRNA_synth_B"/>
    <property type="match status" value="1"/>
</dbReference>
<dbReference type="InterPro" id="IPR001412">
    <property type="entry name" value="aa-tRNA-synth_I_CS"/>
</dbReference>
<dbReference type="InterPro" id="IPR002300">
    <property type="entry name" value="aa-tRNA-synth_Ia"/>
</dbReference>
<dbReference type="InterPro" id="IPR002302">
    <property type="entry name" value="Leu-tRNA-ligase"/>
</dbReference>
<dbReference type="InterPro" id="IPR025709">
    <property type="entry name" value="Leu_tRNA-synth_edit"/>
</dbReference>
<dbReference type="InterPro" id="IPR013155">
    <property type="entry name" value="M/V/L/I-tRNA-synth_anticd-bd"/>
</dbReference>
<dbReference type="InterPro" id="IPR015413">
    <property type="entry name" value="Methionyl/Leucyl_tRNA_Synth"/>
</dbReference>
<dbReference type="InterPro" id="IPR014729">
    <property type="entry name" value="Rossmann-like_a/b/a_fold"/>
</dbReference>
<dbReference type="InterPro" id="IPR009080">
    <property type="entry name" value="tRNAsynth_Ia_anticodon-bd"/>
</dbReference>
<dbReference type="InterPro" id="IPR009008">
    <property type="entry name" value="Val/Leu/Ile-tRNA-synth_edit"/>
</dbReference>
<dbReference type="NCBIfam" id="TIGR00396">
    <property type="entry name" value="leuS_bact"/>
    <property type="match status" value="1"/>
</dbReference>
<dbReference type="PANTHER" id="PTHR43740:SF2">
    <property type="entry name" value="LEUCINE--TRNA LIGASE, MITOCHONDRIAL"/>
    <property type="match status" value="1"/>
</dbReference>
<dbReference type="PANTHER" id="PTHR43740">
    <property type="entry name" value="LEUCYL-TRNA SYNTHETASE"/>
    <property type="match status" value="1"/>
</dbReference>
<dbReference type="Pfam" id="PF08264">
    <property type="entry name" value="Anticodon_1"/>
    <property type="match status" value="1"/>
</dbReference>
<dbReference type="Pfam" id="PF00133">
    <property type="entry name" value="tRNA-synt_1"/>
    <property type="match status" value="2"/>
</dbReference>
<dbReference type="Pfam" id="PF13603">
    <property type="entry name" value="tRNA-synt_1_2"/>
    <property type="match status" value="1"/>
</dbReference>
<dbReference type="Pfam" id="PF09334">
    <property type="entry name" value="tRNA-synt_1g"/>
    <property type="match status" value="1"/>
</dbReference>
<dbReference type="PRINTS" id="PR00985">
    <property type="entry name" value="TRNASYNTHLEU"/>
</dbReference>
<dbReference type="SUPFAM" id="SSF47323">
    <property type="entry name" value="Anticodon-binding domain of a subclass of class I aminoacyl-tRNA synthetases"/>
    <property type="match status" value="1"/>
</dbReference>
<dbReference type="SUPFAM" id="SSF52374">
    <property type="entry name" value="Nucleotidylyl transferase"/>
    <property type="match status" value="1"/>
</dbReference>
<dbReference type="SUPFAM" id="SSF50677">
    <property type="entry name" value="ValRS/IleRS/LeuRS editing domain"/>
    <property type="match status" value="1"/>
</dbReference>
<dbReference type="PROSITE" id="PS00178">
    <property type="entry name" value="AA_TRNA_LIGASE_I"/>
    <property type="match status" value="1"/>
</dbReference>
<comment type="catalytic activity">
    <reaction evidence="1">
        <text>tRNA(Leu) + L-leucine + ATP = L-leucyl-tRNA(Leu) + AMP + diphosphate</text>
        <dbReference type="Rhea" id="RHEA:11688"/>
        <dbReference type="Rhea" id="RHEA-COMP:9613"/>
        <dbReference type="Rhea" id="RHEA-COMP:9622"/>
        <dbReference type="ChEBI" id="CHEBI:30616"/>
        <dbReference type="ChEBI" id="CHEBI:33019"/>
        <dbReference type="ChEBI" id="CHEBI:57427"/>
        <dbReference type="ChEBI" id="CHEBI:78442"/>
        <dbReference type="ChEBI" id="CHEBI:78494"/>
        <dbReference type="ChEBI" id="CHEBI:456215"/>
        <dbReference type="EC" id="6.1.1.4"/>
    </reaction>
</comment>
<comment type="subcellular location">
    <subcellularLocation>
        <location evidence="1">Cytoplasm</location>
    </subcellularLocation>
</comment>
<comment type="similarity">
    <text evidence="1">Belongs to the class-I aminoacyl-tRNA synthetase family.</text>
</comment>
<keyword id="KW-0030">Aminoacyl-tRNA synthetase</keyword>
<keyword id="KW-0067">ATP-binding</keyword>
<keyword id="KW-0963">Cytoplasm</keyword>
<keyword id="KW-0436">Ligase</keyword>
<keyword id="KW-0547">Nucleotide-binding</keyword>
<keyword id="KW-0648">Protein biosynthesis</keyword>
<reference key="1">
    <citation type="journal article" date="2010" name="J. Bacteriol.">
        <title>Whole genome sequences of two Xylella fastidiosa strains (M12 and M23) causing almond leaf scorch disease in California.</title>
        <authorList>
            <person name="Chen J."/>
            <person name="Xie G."/>
            <person name="Han S."/>
            <person name="Chertkov O."/>
            <person name="Sims D."/>
            <person name="Civerolo E.L."/>
        </authorList>
    </citation>
    <scope>NUCLEOTIDE SEQUENCE [LARGE SCALE GENOMIC DNA]</scope>
    <source>
        <strain>M23</strain>
    </source>
</reference>
<name>SYL_XYLF2</name>